<name>ALKE_BABBO</name>
<accession>P40690</accession>
<proteinExistence type="evidence at transcript level"/>
<comment type="similarity">
    <text evidence="2">Belongs to the aldo/keto reductase family. Aldo/keto reductase 2 subfamily.</text>
</comment>
<feature type="chain" id="PRO_0000070373" description="Aldo-keto reductase">
    <location>
        <begin position="1" status="less than"/>
        <end position="285" status="greater than"/>
    </location>
</feature>
<feature type="binding site" evidence="1">
    <location>
        <begin position="165"/>
        <end position="175"/>
    </location>
    <ligand>
        <name>NADP(+)</name>
        <dbReference type="ChEBI" id="CHEBI:58349"/>
    </ligand>
</feature>
<feature type="non-terminal residue">
    <location>
        <position position="1"/>
    </location>
</feature>
<feature type="non-terminal residue">
    <location>
        <position position="285"/>
    </location>
</feature>
<protein>
    <recommendedName>
        <fullName>Aldo-keto reductase</fullName>
    </recommendedName>
</protein>
<sequence length="285" mass="32470">SKVVIATKVASRSSHLSWLRSGDCKLSKDNILKAVDGSLSRLNTDYIDLLQLHWPDRYVPMNANGDFHEVFHDTENMIDENSVPLEDQLDALQTLLTQGKIRHWGLSNETPWGTLRFYKLAKQAGVAAPASVQLHYNLLCRNEVEKGFVELCRPQNTGIAILAYAPLAGGILTGKYLEYMDPTTSGRLLRFPSYMSRYRGSLAARAVKDYYNIAMSYKYPNLCALALRWVLTRPFICSTVIGANDFYQLRENIHCSMPSLGITDLLEREINQLHWKWRDPIRICQ</sequence>
<dbReference type="EMBL" id="M93122">
    <property type="protein sequence ID" value="AAA27794.1"/>
    <property type="molecule type" value="mRNA"/>
</dbReference>
<dbReference type="SMR" id="P40690"/>
<dbReference type="VEuPathDB" id="PiroplasmaDB:BBOV_IV000130"/>
<dbReference type="eggNOG" id="KOG1575">
    <property type="taxonomic scope" value="Eukaryota"/>
</dbReference>
<dbReference type="GO" id="GO:0016491">
    <property type="term" value="F:oxidoreductase activity"/>
    <property type="evidence" value="ECO:0007669"/>
    <property type="project" value="UniProtKB-KW"/>
</dbReference>
<dbReference type="Gene3D" id="3.20.20.100">
    <property type="entry name" value="NADP-dependent oxidoreductase domain"/>
    <property type="match status" value="1"/>
</dbReference>
<dbReference type="InterPro" id="IPR020471">
    <property type="entry name" value="AKR"/>
</dbReference>
<dbReference type="InterPro" id="IPR050523">
    <property type="entry name" value="AKR_Detox_Biosynth"/>
</dbReference>
<dbReference type="InterPro" id="IPR023210">
    <property type="entry name" value="NADP_OxRdtase_dom"/>
</dbReference>
<dbReference type="InterPro" id="IPR036812">
    <property type="entry name" value="NADP_OxRdtase_dom_sf"/>
</dbReference>
<dbReference type="PANTHER" id="PTHR43364:SF4">
    <property type="entry name" value="NAD(P)-LINKED OXIDOREDUCTASE SUPERFAMILY PROTEIN"/>
    <property type="match status" value="1"/>
</dbReference>
<dbReference type="PANTHER" id="PTHR43364">
    <property type="entry name" value="NADH-SPECIFIC METHYLGLYOXAL REDUCTASE-RELATED"/>
    <property type="match status" value="1"/>
</dbReference>
<dbReference type="Pfam" id="PF00248">
    <property type="entry name" value="Aldo_ket_red"/>
    <property type="match status" value="1"/>
</dbReference>
<dbReference type="PRINTS" id="PR00069">
    <property type="entry name" value="ALDKETRDTASE"/>
</dbReference>
<dbReference type="SUPFAM" id="SSF51430">
    <property type="entry name" value="NAD(P)-linked oxidoreductase"/>
    <property type="match status" value="1"/>
</dbReference>
<keyword id="KW-0521">NADP</keyword>
<keyword id="KW-0560">Oxidoreductase</keyword>
<organism>
    <name type="scientific">Babesia bovis</name>
    <dbReference type="NCBI Taxonomy" id="5865"/>
    <lineage>
        <taxon>Eukaryota</taxon>
        <taxon>Sar</taxon>
        <taxon>Alveolata</taxon>
        <taxon>Apicomplexa</taxon>
        <taxon>Aconoidasida</taxon>
        <taxon>Piroplasmida</taxon>
        <taxon>Babesiidae</taxon>
        <taxon>Babesia</taxon>
    </lineage>
</organism>
<evidence type="ECO:0000250" key="1"/>
<evidence type="ECO:0000305" key="2"/>
<reference key="1">
    <citation type="journal article" date="1992" name="Biochem. Int.">
        <title>Characterisation of genes encoding two novel members of the aldo-keto reductase superfamily.</title>
        <authorList>
            <person name="Dalrymple B.P."/>
            <person name="Peters J.M."/>
            <person name="Vuocolo T."/>
        </authorList>
    </citation>
    <scope>NUCLEOTIDE SEQUENCE [MRNA]</scope>
</reference>